<feature type="chain" id="PRO_1000186517" description="Chorismate pyruvate-lyase">
    <location>
        <begin position="1"/>
        <end position="165"/>
    </location>
</feature>
<feature type="binding site" evidence="1">
    <location>
        <position position="35"/>
    </location>
    <ligand>
        <name>substrate</name>
    </ligand>
</feature>
<feature type="binding site" evidence="1">
    <location>
        <position position="77"/>
    </location>
    <ligand>
        <name>substrate</name>
    </ligand>
</feature>
<feature type="binding site" evidence="1">
    <location>
        <position position="115"/>
    </location>
    <ligand>
        <name>substrate</name>
    </ligand>
</feature>
<feature type="binding site" evidence="1">
    <location>
        <position position="156"/>
    </location>
    <ligand>
        <name>substrate</name>
    </ligand>
</feature>
<proteinExistence type="inferred from homology"/>
<protein>
    <recommendedName>
        <fullName evidence="1">Chorismate pyruvate-lyase</fullName>
        <shortName evidence="1">CL</shortName>
        <shortName evidence="1">CPL</shortName>
        <ecNumber evidence="1">4.1.3.40</ecNumber>
    </recommendedName>
</protein>
<dbReference type="EC" id="4.1.3.40" evidence="1"/>
<dbReference type="EMBL" id="FM180568">
    <property type="protein sequence ID" value="CAS11902.1"/>
    <property type="molecule type" value="Genomic_DNA"/>
</dbReference>
<dbReference type="RefSeq" id="WP_000019227.1">
    <property type="nucleotide sequence ID" value="NC_011601.1"/>
</dbReference>
<dbReference type="SMR" id="B7UPK0"/>
<dbReference type="KEGG" id="ecg:E2348C_4354"/>
<dbReference type="HOGENOM" id="CLU_096824_1_0_6"/>
<dbReference type="UniPathway" id="UPA00232"/>
<dbReference type="Proteomes" id="UP000008205">
    <property type="component" value="Chromosome"/>
</dbReference>
<dbReference type="GO" id="GO:0005829">
    <property type="term" value="C:cytosol"/>
    <property type="evidence" value="ECO:0007669"/>
    <property type="project" value="TreeGrafter"/>
</dbReference>
<dbReference type="GO" id="GO:0008813">
    <property type="term" value="F:chorismate lyase activity"/>
    <property type="evidence" value="ECO:0007669"/>
    <property type="project" value="UniProtKB-UniRule"/>
</dbReference>
<dbReference type="GO" id="GO:0042866">
    <property type="term" value="P:pyruvate biosynthetic process"/>
    <property type="evidence" value="ECO:0007669"/>
    <property type="project" value="UniProtKB-UniRule"/>
</dbReference>
<dbReference type="GO" id="GO:0006744">
    <property type="term" value="P:ubiquinone biosynthetic process"/>
    <property type="evidence" value="ECO:0007669"/>
    <property type="project" value="UniProtKB-UniRule"/>
</dbReference>
<dbReference type="FunFam" id="3.40.1410.10:FF:000002">
    <property type="entry name" value="Chorismate pyruvate-lyase"/>
    <property type="match status" value="1"/>
</dbReference>
<dbReference type="Gene3D" id="3.40.1410.10">
    <property type="entry name" value="Chorismate lyase-like"/>
    <property type="match status" value="1"/>
</dbReference>
<dbReference type="HAMAP" id="MF_01632">
    <property type="entry name" value="UbiC"/>
    <property type="match status" value="1"/>
</dbReference>
<dbReference type="InterPro" id="IPR007440">
    <property type="entry name" value="Chorismate--pyruvate_lyase"/>
</dbReference>
<dbReference type="InterPro" id="IPR028978">
    <property type="entry name" value="Chorismate_lyase_/UTRA_dom_sf"/>
</dbReference>
<dbReference type="NCBIfam" id="NF008656">
    <property type="entry name" value="PRK11655.1"/>
    <property type="match status" value="1"/>
</dbReference>
<dbReference type="PANTHER" id="PTHR38683">
    <property type="entry name" value="CHORISMATE PYRUVATE-LYASE"/>
    <property type="match status" value="1"/>
</dbReference>
<dbReference type="PANTHER" id="PTHR38683:SF1">
    <property type="entry name" value="CHORISMATE PYRUVATE-LYASE"/>
    <property type="match status" value="1"/>
</dbReference>
<dbReference type="Pfam" id="PF04345">
    <property type="entry name" value="Chor_lyase"/>
    <property type="match status" value="1"/>
</dbReference>
<dbReference type="SUPFAM" id="SSF64288">
    <property type="entry name" value="Chorismate lyase-like"/>
    <property type="match status" value="1"/>
</dbReference>
<gene>
    <name evidence="1" type="primary">ubiC</name>
    <name type="ordered locus">E2348C_4354</name>
</gene>
<accession>B7UPK0</accession>
<evidence type="ECO:0000255" key="1">
    <source>
        <dbReference type="HAMAP-Rule" id="MF_01632"/>
    </source>
</evidence>
<organism>
    <name type="scientific">Escherichia coli O127:H6 (strain E2348/69 / EPEC)</name>
    <dbReference type="NCBI Taxonomy" id="574521"/>
    <lineage>
        <taxon>Bacteria</taxon>
        <taxon>Pseudomonadati</taxon>
        <taxon>Pseudomonadota</taxon>
        <taxon>Gammaproteobacteria</taxon>
        <taxon>Enterobacterales</taxon>
        <taxon>Enterobacteriaceae</taxon>
        <taxon>Escherichia</taxon>
    </lineage>
</organism>
<name>UBIC_ECO27</name>
<reference key="1">
    <citation type="journal article" date="2009" name="J. Bacteriol.">
        <title>Complete genome sequence and comparative genome analysis of enteropathogenic Escherichia coli O127:H6 strain E2348/69.</title>
        <authorList>
            <person name="Iguchi A."/>
            <person name="Thomson N.R."/>
            <person name="Ogura Y."/>
            <person name="Saunders D."/>
            <person name="Ooka T."/>
            <person name="Henderson I.R."/>
            <person name="Harris D."/>
            <person name="Asadulghani M."/>
            <person name="Kurokawa K."/>
            <person name="Dean P."/>
            <person name="Kenny B."/>
            <person name="Quail M.A."/>
            <person name="Thurston S."/>
            <person name="Dougan G."/>
            <person name="Hayashi T."/>
            <person name="Parkhill J."/>
            <person name="Frankel G."/>
        </authorList>
    </citation>
    <scope>NUCLEOTIDE SEQUENCE [LARGE SCALE GENOMIC DNA]</scope>
    <source>
        <strain>E2348/69 / EPEC</strain>
    </source>
</reference>
<comment type="function">
    <text evidence="1">Removes the pyruvyl group from chorismate, with concomitant aromatization of the ring, to provide 4-hydroxybenzoate (4HB) for the ubiquinone pathway.</text>
</comment>
<comment type="catalytic activity">
    <reaction evidence="1">
        <text>chorismate = 4-hydroxybenzoate + pyruvate</text>
        <dbReference type="Rhea" id="RHEA:16505"/>
        <dbReference type="ChEBI" id="CHEBI:15361"/>
        <dbReference type="ChEBI" id="CHEBI:17879"/>
        <dbReference type="ChEBI" id="CHEBI:29748"/>
        <dbReference type="EC" id="4.1.3.40"/>
    </reaction>
</comment>
<comment type="pathway">
    <text evidence="1">Cofactor biosynthesis; ubiquinone biosynthesis.</text>
</comment>
<comment type="subunit">
    <text evidence="1">Monomer.</text>
</comment>
<comment type="subcellular location">
    <subcellularLocation>
        <location evidence="1">Cytoplasm</location>
    </subcellularLocation>
</comment>
<comment type="similarity">
    <text evidence="1">Belongs to the UbiC family.</text>
</comment>
<sequence>MSHPALTQLRALRYFTEIPALEPQLLDWLLLEDSMTKRFEQQGKTVSVTMIREGFVEQNEIPEELPLLPKESRYWLREILLCADGEPWLAGRTVVPVSTLSGPELALQKLGKTPLGRYLFTSSTLTRDFIEIGRDAGLWGRRSRLRLSGKPLLLTELFLPASPLY</sequence>
<keyword id="KW-0963">Cytoplasm</keyword>
<keyword id="KW-0456">Lyase</keyword>
<keyword id="KW-0670">Pyruvate</keyword>
<keyword id="KW-1185">Reference proteome</keyword>
<keyword id="KW-0831">Ubiquinone biosynthesis</keyword>